<dbReference type="EC" id="2.8.1.1" evidence="1"/>
<dbReference type="EMBL" id="CU928160">
    <property type="protein sequence ID" value="CAR00367.1"/>
    <property type="molecule type" value="Genomic_DNA"/>
</dbReference>
<dbReference type="RefSeq" id="WP_000362869.1">
    <property type="nucleotide sequence ID" value="NC_011741.1"/>
</dbReference>
<dbReference type="SMR" id="B7M2I5"/>
<dbReference type="KEGG" id="ecr:ECIAI1_3568"/>
<dbReference type="HOGENOM" id="CLU_089574_14_0_6"/>
<dbReference type="GO" id="GO:0005737">
    <property type="term" value="C:cytoplasm"/>
    <property type="evidence" value="ECO:0007669"/>
    <property type="project" value="UniProtKB-SubCell"/>
</dbReference>
<dbReference type="GO" id="GO:0004792">
    <property type="term" value="F:thiosulfate-cyanide sulfurtransferase activity"/>
    <property type="evidence" value="ECO:0007669"/>
    <property type="project" value="UniProtKB-UniRule"/>
</dbReference>
<dbReference type="GO" id="GO:0006071">
    <property type="term" value="P:glycerol metabolic process"/>
    <property type="evidence" value="ECO:0007669"/>
    <property type="project" value="UniProtKB-UniRule"/>
</dbReference>
<dbReference type="CDD" id="cd01444">
    <property type="entry name" value="GlpE_ST"/>
    <property type="match status" value="1"/>
</dbReference>
<dbReference type="FunFam" id="3.40.250.10:FF:000007">
    <property type="entry name" value="Thiosulfate sulfurtransferase GlpE"/>
    <property type="match status" value="1"/>
</dbReference>
<dbReference type="Gene3D" id="3.40.250.10">
    <property type="entry name" value="Rhodanese-like domain"/>
    <property type="match status" value="1"/>
</dbReference>
<dbReference type="HAMAP" id="MF_01009">
    <property type="entry name" value="Thiosulf_sulfurtr"/>
    <property type="match status" value="1"/>
</dbReference>
<dbReference type="InterPro" id="IPR050229">
    <property type="entry name" value="GlpE_sulfurtransferase"/>
</dbReference>
<dbReference type="InterPro" id="IPR001763">
    <property type="entry name" value="Rhodanese-like_dom"/>
</dbReference>
<dbReference type="InterPro" id="IPR036873">
    <property type="entry name" value="Rhodanese-like_dom_sf"/>
</dbReference>
<dbReference type="InterPro" id="IPR023695">
    <property type="entry name" value="Thiosulf_sulfurTrfase"/>
</dbReference>
<dbReference type="NCBIfam" id="NF001195">
    <property type="entry name" value="PRK00162.1"/>
    <property type="match status" value="1"/>
</dbReference>
<dbReference type="PANTHER" id="PTHR43031">
    <property type="entry name" value="FAD-DEPENDENT OXIDOREDUCTASE"/>
    <property type="match status" value="1"/>
</dbReference>
<dbReference type="PANTHER" id="PTHR43031:SF6">
    <property type="entry name" value="THIOSULFATE SULFURTRANSFERASE GLPE"/>
    <property type="match status" value="1"/>
</dbReference>
<dbReference type="Pfam" id="PF00581">
    <property type="entry name" value="Rhodanese"/>
    <property type="match status" value="1"/>
</dbReference>
<dbReference type="SMART" id="SM00450">
    <property type="entry name" value="RHOD"/>
    <property type="match status" value="1"/>
</dbReference>
<dbReference type="SUPFAM" id="SSF52821">
    <property type="entry name" value="Rhodanese/Cell cycle control phosphatase"/>
    <property type="match status" value="1"/>
</dbReference>
<dbReference type="PROSITE" id="PS50206">
    <property type="entry name" value="RHODANESE_3"/>
    <property type="match status" value="1"/>
</dbReference>
<reference key="1">
    <citation type="journal article" date="2009" name="PLoS Genet.">
        <title>Organised genome dynamics in the Escherichia coli species results in highly diverse adaptive paths.</title>
        <authorList>
            <person name="Touchon M."/>
            <person name="Hoede C."/>
            <person name="Tenaillon O."/>
            <person name="Barbe V."/>
            <person name="Baeriswyl S."/>
            <person name="Bidet P."/>
            <person name="Bingen E."/>
            <person name="Bonacorsi S."/>
            <person name="Bouchier C."/>
            <person name="Bouvet O."/>
            <person name="Calteau A."/>
            <person name="Chiapello H."/>
            <person name="Clermont O."/>
            <person name="Cruveiller S."/>
            <person name="Danchin A."/>
            <person name="Diard M."/>
            <person name="Dossat C."/>
            <person name="Karoui M.E."/>
            <person name="Frapy E."/>
            <person name="Garry L."/>
            <person name="Ghigo J.M."/>
            <person name="Gilles A.M."/>
            <person name="Johnson J."/>
            <person name="Le Bouguenec C."/>
            <person name="Lescat M."/>
            <person name="Mangenot S."/>
            <person name="Martinez-Jehanne V."/>
            <person name="Matic I."/>
            <person name="Nassif X."/>
            <person name="Oztas S."/>
            <person name="Petit M.A."/>
            <person name="Pichon C."/>
            <person name="Rouy Z."/>
            <person name="Ruf C.S."/>
            <person name="Schneider D."/>
            <person name="Tourret J."/>
            <person name="Vacherie B."/>
            <person name="Vallenet D."/>
            <person name="Medigue C."/>
            <person name="Rocha E.P.C."/>
            <person name="Denamur E."/>
        </authorList>
    </citation>
    <scope>NUCLEOTIDE SEQUENCE [LARGE SCALE GENOMIC DNA]</scope>
    <source>
        <strain>IAI1</strain>
    </source>
</reference>
<comment type="function">
    <text evidence="1">Transferase that catalyzes the transfer of sulfur from thiosulfate to thiophilic acceptors such as cyanide or dithiols. May function in a CysM-independent thiosulfate assimilation pathway by catalyzing the conversion of thiosulfate to sulfite, which can then be used for L-cysteine biosynthesis.</text>
</comment>
<comment type="catalytic activity">
    <reaction evidence="1">
        <text>thiosulfate + hydrogen cyanide = thiocyanate + sulfite + 2 H(+)</text>
        <dbReference type="Rhea" id="RHEA:16881"/>
        <dbReference type="ChEBI" id="CHEBI:15378"/>
        <dbReference type="ChEBI" id="CHEBI:17359"/>
        <dbReference type="ChEBI" id="CHEBI:18022"/>
        <dbReference type="ChEBI" id="CHEBI:18407"/>
        <dbReference type="ChEBI" id="CHEBI:33542"/>
        <dbReference type="EC" id="2.8.1.1"/>
    </reaction>
</comment>
<comment type="catalytic activity">
    <reaction evidence="1">
        <text>thiosulfate + [thioredoxin]-dithiol = [thioredoxin]-disulfide + hydrogen sulfide + sulfite + 2 H(+)</text>
        <dbReference type="Rhea" id="RHEA:83859"/>
        <dbReference type="Rhea" id="RHEA-COMP:10698"/>
        <dbReference type="Rhea" id="RHEA-COMP:10700"/>
        <dbReference type="ChEBI" id="CHEBI:15378"/>
        <dbReference type="ChEBI" id="CHEBI:17359"/>
        <dbReference type="ChEBI" id="CHEBI:29919"/>
        <dbReference type="ChEBI" id="CHEBI:29950"/>
        <dbReference type="ChEBI" id="CHEBI:33542"/>
        <dbReference type="ChEBI" id="CHEBI:50058"/>
    </reaction>
</comment>
<comment type="subcellular location">
    <subcellularLocation>
        <location evidence="1">Cytoplasm</location>
    </subcellularLocation>
</comment>
<comment type="similarity">
    <text evidence="1">Belongs to the GlpE family.</text>
</comment>
<evidence type="ECO:0000255" key="1">
    <source>
        <dbReference type="HAMAP-Rule" id="MF_01009"/>
    </source>
</evidence>
<gene>
    <name evidence="1" type="primary">glpE</name>
    <name type="ordered locus">ECIAI1_3568</name>
</gene>
<feature type="chain" id="PRO_1000134851" description="Thiosulfate sulfurtransferase GlpE">
    <location>
        <begin position="1"/>
        <end position="108"/>
    </location>
</feature>
<feature type="domain" description="Rhodanese" evidence="1">
    <location>
        <begin position="17"/>
        <end position="105"/>
    </location>
</feature>
<feature type="active site" description="Cysteine persulfide intermediate" evidence="1">
    <location>
        <position position="65"/>
    </location>
</feature>
<organism>
    <name type="scientific">Escherichia coli O8 (strain IAI1)</name>
    <dbReference type="NCBI Taxonomy" id="585034"/>
    <lineage>
        <taxon>Bacteria</taxon>
        <taxon>Pseudomonadati</taxon>
        <taxon>Pseudomonadota</taxon>
        <taxon>Gammaproteobacteria</taxon>
        <taxon>Enterobacterales</taxon>
        <taxon>Enterobacteriaceae</taxon>
        <taxon>Escherichia</taxon>
    </lineage>
</organism>
<proteinExistence type="inferred from homology"/>
<sequence length="108" mass="12067">MDLFECINVADAHQKLQEKEAVLVDIRDPQSFAMGHAVQAFHLTNDTLGAFMRDNDFDTPVMVMCYHGNSSKGAAQYLLQQGYDVVYSIDGGFEAWQRQFPAEVAYGA</sequence>
<protein>
    <recommendedName>
        <fullName evidence="1">Thiosulfate sulfurtransferase GlpE</fullName>
        <ecNumber evidence="1">2.8.1.1</ecNumber>
    </recommendedName>
</protein>
<keyword id="KW-0963">Cytoplasm</keyword>
<keyword id="KW-0808">Transferase</keyword>
<accession>B7M2I5</accession>
<name>GLPE_ECO8A</name>